<reference key="1">
    <citation type="submission" date="2008-05" db="EMBL/GenBank/DDBJ databases">
        <title>Genome sequence of Clostridium botulinum Ba4 strain 657.</title>
        <authorList>
            <person name="Shrivastava S."/>
            <person name="Brown J.L."/>
            <person name="Bruce D."/>
            <person name="Detter C."/>
            <person name="Munk C."/>
            <person name="Smith L.A."/>
            <person name="Smith T.J."/>
            <person name="Sutton G."/>
            <person name="Brettin T.S."/>
        </authorList>
    </citation>
    <scope>NUCLEOTIDE SEQUENCE [LARGE SCALE GENOMIC DNA]</scope>
    <source>
        <strain>657 / Type Ba4</strain>
    </source>
</reference>
<evidence type="ECO:0000255" key="1">
    <source>
        <dbReference type="HAMAP-Rule" id="MF_00041"/>
    </source>
</evidence>
<name>SYC_CLOB6</name>
<comment type="catalytic activity">
    <reaction evidence="1">
        <text>tRNA(Cys) + L-cysteine + ATP = L-cysteinyl-tRNA(Cys) + AMP + diphosphate</text>
        <dbReference type="Rhea" id="RHEA:17773"/>
        <dbReference type="Rhea" id="RHEA-COMP:9661"/>
        <dbReference type="Rhea" id="RHEA-COMP:9679"/>
        <dbReference type="ChEBI" id="CHEBI:30616"/>
        <dbReference type="ChEBI" id="CHEBI:33019"/>
        <dbReference type="ChEBI" id="CHEBI:35235"/>
        <dbReference type="ChEBI" id="CHEBI:78442"/>
        <dbReference type="ChEBI" id="CHEBI:78517"/>
        <dbReference type="ChEBI" id="CHEBI:456215"/>
        <dbReference type="EC" id="6.1.1.16"/>
    </reaction>
</comment>
<comment type="cofactor">
    <cofactor evidence="1">
        <name>Zn(2+)</name>
        <dbReference type="ChEBI" id="CHEBI:29105"/>
    </cofactor>
    <text evidence="1">Binds 1 zinc ion per subunit.</text>
</comment>
<comment type="subunit">
    <text evidence="1">Monomer.</text>
</comment>
<comment type="subcellular location">
    <subcellularLocation>
        <location evidence="1">Cytoplasm</location>
    </subcellularLocation>
</comment>
<comment type="similarity">
    <text evidence="1">Belongs to the class-I aminoacyl-tRNA synthetase family.</text>
</comment>
<dbReference type="EC" id="6.1.1.16" evidence="1"/>
<dbReference type="EMBL" id="CP001083">
    <property type="protein sequence ID" value="ACQ52341.1"/>
    <property type="molecule type" value="Genomic_DNA"/>
</dbReference>
<dbReference type="RefSeq" id="WP_003360177.1">
    <property type="nucleotide sequence ID" value="NC_012658.1"/>
</dbReference>
<dbReference type="SMR" id="C3KVS3"/>
<dbReference type="KEGG" id="cbi:CLJ_B3813"/>
<dbReference type="HOGENOM" id="CLU_013528_0_1_9"/>
<dbReference type="Proteomes" id="UP000002333">
    <property type="component" value="Chromosome"/>
</dbReference>
<dbReference type="GO" id="GO:0005829">
    <property type="term" value="C:cytosol"/>
    <property type="evidence" value="ECO:0007669"/>
    <property type="project" value="TreeGrafter"/>
</dbReference>
<dbReference type="GO" id="GO:0005524">
    <property type="term" value="F:ATP binding"/>
    <property type="evidence" value="ECO:0007669"/>
    <property type="project" value="UniProtKB-UniRule"/>
</dbReference>
<dbReference type="GO" id="GO:0004817">
    <property type="term" value="F:cysteine-tRNA ligase activity"/>
    <property type="evidence" value="ECO:0007669"/>
    <property type="project" value="UniProtKB-UniRule"/>
</dbReference>
<dbReference type="GO" id="GO:0008270">
    <property type="term" value="F:zinc ion binding"/>
    <property type="evidence" value="ECO:0007669"/>
    <property type="project" value="UniProtKB-UniRule"/>
</dbReference>
<dbReference type="GO" id="GO:0006423">
    <property type="term" value="P:cysteinyl-tRNA aminoacylation"/>
    <property type="evidence" value="ECO:0007669"/>
    <property type="project" value="UniProtKB-UniRule"/>
</dbReference>
<dbReference type="CDD" id="cd00672">
    <property type="entry name" value="CysRS_core"/>
    <property type="match status" value="1"/>
</dbReference>
<dbReference type="FunFam" id="3.40.50.620:FF:000009">
    <property type="entry name" value="Cysteine--tRNA ligase"/>
    <property type="match status" value="1"/>
</dbReference>
<dbReference type="Gene3D" id="1.20.120.1910">
    <property type="entry name" value="Cysteine-tRNA ligase, C-terminal anti-codon recognition domain"/>
    <property type="match status" value="1"/>
</dbReference>
<dbReference type="Gene3D" id="3.40.50.620">
    <property type="entry name" value="HUPs"/>
    <property type="match status" value="1"/>
</dbReference>
<dbReference type="HAMAP" id="MF_00041">
    <property type="entry name" value="Cys_tRNA_synth"/>
    <property type="match status" value="1"/>
</dbReference>
<dbReference type="InterPro" id="IPR015803">
    <property type="entry name" value="Cys-tRNA-ligase"/>
</dbReference>
<dbReference type="InterPro" id="IPR015273">
    <property type="entry name" value="Cys-tRNA-synt_Ia_DALR"/>
</dbReference>
<dbReference type="InterPro" id="IPR024909">
    <property type="entry name" value="Cys-tRNA/MSH_ligase"/>
</dbReference>
<dbReference type="InterPro" id="IPR056411">
    <property type="entry name" value="CysS_C"/>
</dbReference>
<dbReference type="InterPro" id="IPR014729">
    <property type="entry name" value="Rossmann-like_a/b/a_fold"/>
</dbReference>
<dbReference type="InterPro" id="IPR032678">
    <property type="entry name" value="tRNA-synt_1_cat_dom"/>
</dbReference>
<dbReference type="InterPro" id="IPR009080">
    <property type="entry name" value="tRNAsynth_Ia_anticodon-bd"/>
</dbReference>
<dbReference type="NCBIfam" id="TIGR00435">
    <property type="entry name" value="cysS"/>
    <property type="match status" value="1"/>
</dbReference>
<dbReference type="PANTHER" id="PTHR10890:SF3">
    <property type="entry name" value="CYSTEINE--TRNA LIGASE, CYTOPLASMIC"/>
    <property type="match status" value="1"/>
</dbReference>
<dbReference type="PANTHER" id="PTHR10890">
    <property type="entry name" value="CYSTEINYL-TRNA SYNTHETASE"/>
    <property type="match status" value="1"/>
</dbReference>
<dbReference type="Pfam" id="PF23493">
    <property type="entry name" value="CysS_C"/>
    <property type="match status" value="1"/>
</dbReference>
<dbReference type="Pfam" id="PF09190">
    <property type="entry name" value="DALR_2"/>
    <property type="match status" value="1"/>
</dbReference>
<dbReference type="Pfam" id="PF01406">
    <property type="entry name" value="tRNA-synt_1e"/>
    <property type="match status" value="1"/>
</dbReference>
<dbReference type="PRINTS" id="PR00983">
    <property type="entry name" value="TRNASYNTHCYS"/>
</dbReference>
<dbReference type="SMART" id="SM00840">
    <property type="entry name" value="DALR_2"/>
    <property type="match status" value="1"/>
</dbReference>
<dbReference type="SUPFAM" id="SSF47323">
    <property type="entry name" value="Anticodon-binding domain of a subclass of class I aminoacyl-tRNA synthetases"/>
    <property type="match status" value="1"/>
</dbReference>
<dbReference type="SUPFAM" id="SSF52374">
    <property type="entry name" value="Nucleotidylyl transferase"/>
    <property type="match status" value="1"/>
</dbReference>
<gene>
    <name evidence="1" type="primary">cysS</name>
    <name type="ordered locus">CLJ_B3813</name>
</gene>
<feature type="chain" id="PRO_1000202116" description="Cysteine--tRNA ligase">
    <location>
        <begin position="1"/>
        <end position="465"/>
    </location>
</feature>
<feature type="short sequence motif" description="'HIGH' region">
    <location>
        <begin position="29"/>
        <end position="39"/>
    </location>
</feature>
<feature type="short sequence motif" description="'KMSKS' region">
    <location>
        <begin position="264"/>
        <end position="268"/>
    </location>
</feature>
<feature type="binding site" evidence="1">
    <location>
        <position position="27"/>
    </location>
    <ligand>
        <name>Zn(2+)</name>
        <dbReference type="ChEBI" id="CHEBI:29105"/>
    </ligand>
</feature>
<feature type="binding site" evidence="1">
    <location>
        <position position="207"/>
    </location>
    <ligand>
        <name>Zn(2+)</name>
        <dbReference type="ChEBI" id="CHEBI:29105"/>
    </ligand>
</feature>
<feature type="binding site" evidence="1">
    <location>
        <position position="232"/>
    </location>
    <ligand>
        <name>Zn(2+)</name>
        <dbReference type="ChEBI" id="CHEBI:29105"/>
    </ligand>
</feature>
<feature type="binding site" evidence="1">
    <location>
        <position position="236"/>
    </location>
    <ligand>
        <name>Zn(2+)</name>
        <dbReference type="ChEBI" id="CHEBI:29105"/>
    </ligand>
</feature>
<feature type="binding site" evidence="1">
    <location>
        <position position="267"/>
    </location>
    <ligand>
        <name>ATP</name>
        <dbReference type="ChEBI" id="CHEBI:30616"/>
    </ligand>
</feature>
<protein>
    <recommendedName>
        <fullName evidence="1">Cysteine--tRNA ligase</fullName>
        <ecNumber evidence="1">6.1.1.16</ecNumber>
    </recommendedName>
    <alternativeName>
        <fullName evidence="1">Cysteinyl-tRNA synthetase</fullName>
        <shortName evidence="1">CysRS</shortName>
    </alternativeName>
</protein>
<keyword id="KW-0030">Aminoacyl-tRNA synthetase</keyword>
<keyword id="KW-0067">ATP-binding</keyword>
<keyword id="KW-0963">Cytoplasm</keyword>
<keyword id="KW-0436">Ligase</keyword>
<keyword id="KW-0479">Metal-binding</keyword>
<keyword id="KW-0547">Nucleotide-binding</keyword>
<keyword id="KW-0648">Protein biosynthesis</keyword>
<keyword id="KW-0862">Zinc</keyword>
<organism>
    <name type="scientific">Clostridium botulinum (strain 657 / Type Ba4)</name>
    <dbReference type="NCBI Taxonomy" id="515621"/>
    <lineage>
        <taxon>Bacteria</taxon>
        <taxon>Bacillati</taxon>
        <taxon>Bacillota</taxon>
        <taxon>Clostridia</taxon>
        <taxon>Eubacteriales</taxon>
        <taxon>Clostridiaceae</taxon>
        <taxon>Clostridium</taxon>
    </lineage>
</organism>
<sequence length="465" mass="54309">MKVYNTLTNKKEEFLPLVPGEVKMYVCGPTVYNFFHIGNARTFVVFDTIRRYLEYRGYKVKFIQNFTDIDDKMIKKANEEGTTVKELGDRFIKEYYKDADDLNIERATKNPRATEFMKEIIKFVSDLIEKGYAYEIDGDVYFSTKKFNSYGKLSGQNLEELQLGARINVDERKKDPMDFAIWKSQKPEEPAWESPWGMGRPGWHIECSCMAYNLLGETIDIHAGGSDLSFPHHENEIAQSEARTGKQFAKYWLHSAFVNVNNQKMSKSLNNFFTAREILEKYDADVLRMFMLSGHYRTQINFSMELLDSTKAALDRLYNSINNLENLLDEVKNEGLRDEELKYRDELQKYKEKYIEKMDDDFNTADAISVIFDLIRDVNTNITIESSKELVKYALDLIRELGSPLGILQKSTKASLEEEIERLIQERQKARKEKDWALADKIRDDLKERGIVLEDTPQGVRWKQI</sequence>
<proteinExistence type="inferred from homology"/>
<accession>C3KVS3</accession>